<feature type="chain" id="PRO_0000318633" description="Selenoprotein N">
    <location>
        <begin position="1"/>
        <end position="557"/>
    </location>
</feature>
<feature type="transmembrane region" description="Helical" evidence="2">
    <location>
        <begin position="35"/>
        <end position="55"/>
    </location>
</feature>
<feature type="region of interest" description="Disordered" evidence="3">
    <location>
        <begin position="1"/>
        <end position="28"/>
    </location>
</feature>
<feature type="compositionally biased region" description="Basic and acidic residues" evidence="3">
    <location>
        <begin position="1"/>
        <end position="21"/>
    </location>
</feature>
<feature type="non-standard amino acid" description="Selenocysteine">
    <location>
        <position position="430"/>
    </location>
</feature>
<feature type="glycosylation site" description="N-linked (GlcNAc...) asparagine" evidence="2">
    <location>
        <position position="451"/>
    </location>
</feature>
<feature type="glycosylation site" description="N-linked (GlcNAc...) asparagine" evidence="2">
    <location>
        <position position="499"/>
    </location>
</feature>
<feature type="sequence conflict" description="In Ref. 2; AAH78430." evidence="9" ref="2">
    <original>G</original>
    <variation>A</variation>
    <location>
        <position position="28"/>
    </location>
</feature>
<feature type="sequence conflict" description="In Ref. 2; AAH78430." evidence="9" ref="2">
    <original>R</original>
    <variation>C</variation>
    <location>
        <position position="29"/>
    </location>
</feature>
<feature type="sequence conflict" description="In Ref. 2; AAH78430." evidence="9" ref="2">
    <original>G</original>
    <variation>S</variation>
    <location>
        <position position="48"/>
    </location>
</feature>
<feature type="sequence conflict" description="In Ref. 2; AAH78430." evidence="9" ref="2">
    <original>V</original>
    <variation>F</variation>
    <location>
        <position position="49"/>
    </location>
</feature>
<feature type="sequence conflict" description="In Ref. 2; AAH78430." evidence="9" ref="2">
    <original>D</original>
    <variation>N</variation>
    <location>
        <position position="56"/>
    </location>
</feature>
<feature type="sequence conflict" description="In Ref. 2; AAH78430." evidence="9" ref="2">
    <original>S</original>
    <variation>P</variation>
    <location>
        <position position="165"/>
    </location>
</feature>
<feature type="sequence conflict" description="In Ref. 2; AAI55255." evidence="9" ref="2">
    <original>P</original>
    <variation>S</variation>
    <location>
        <position position="179"/>
    </location>
</feature>
<feature type="sequence conflict" description="In Ref. 2; AAI55255." evidence="9" ref="2">
    <original>H</original>
    <variation>R</variation>
    <location>
        <position position="228"/>
    </location>
</feature>
<feature type="sequence conflict" description="In Ref. 2; AAH78430." evidence="9" ref="2">
    <original>D</original>
    <variation>Y</variation>
    <location>
        <position position="255"/>
    </location>
</feature>
<feature type="sequence conflict" description="In Ref. 1; AAZ80054." evidence="9" ref="1">
    <original>S</original>
    <variation>L</variation>
    <location>
        <position position="344"/>
    </location>
</feature>
<feature type="sequence conflict" description="In Ref. 1; AAZ80054." evidence="9" ref="1">
    <original>R</original>
    <variation>K</variation>
    <location>
        <position position="378"/>
    </location>
</feature>
<feature type="sequence conflict" description="In Ref. 1; AAZ80054." evidence="9" ref="1">
    <original>S</original>
    <variation>L</variation>
    <location>
        <position position="409"/>
    </location>
</feature>
<feature type="sequence conflict" description="In Ref. 3; AAO65271." evidence="9" ref="3">
    <original>V</original>
    <variation>L</variation>
    <location>
        <position position="474"/>
    </location>
</feature>
<reference key="1">
    <citation type="submission" date="2005-08" db="EMBL/GenBank/DDBJ databases">
        <title>Zebrafish selenoprotein N.</title>
        <authorList>
            <person name="Jurynec M.J."/>
            <person name="Howard M.T."/>
            <person name="Grunwald D.J."/>
        </authorList>
    </citation>
    <scope>NUCLEOTIDE SEQUENCE [MRNA]</scope>
    <source>
        <strain>AB</strain>
    </source>
</reference>
<reference key="2">
    <citation type="submission" date="2007-11" db="EMBL/GenBank/DDBJ databases">
        <authorList>
            <consortium name="NIH - Zebrafish Gene Collection (ZGC) project"/>
        </authorList>
    </citation>
    <scope>NUCLEOTIDE SEQUENCE [LARGE SCALE MRNA]</scope>
    <source>
        <tissue>Embryo</tissue>
    </source>
</reference>
<reference key="3">
    <citation type="journal article" date="2003" name="Gene Expr. Patterns">
        <title>Spatial and temporal expression patterns of selenoprotein genes during embryogenesis in zebrafish.</title>
        <authorList>
            <person name="Thisse C."/>
            <person name="Degrave A."/>
            <person name="Kryukov G.V."/>
            <person name="Gladyshev V.N."/>
            <person name="Obrecht-Pflumio S."/>
            <person name="Krol A."/>
            <person name="Thisse B."/>
            <person name="Lescure A."/>
        </authorList>
    </citation>
    <scope>NUCLEOTIDE SEQUENCE [MRNA] OF 30-557</scope>
    <scope>DEVELOPMENTAL STAGE</scope>
</reference>
<reference key="4">
    <citation type="journal article" date="2007" name="Exp. Cell Res.">
        <title>Loss of selenoprotein N function causes disruption of muscle architecture in the zebrafish embryo.</title>
        <authorList>
            <person name="Deniziak M."/>
            <person name="Thisse C."/>
            <person name="Rederstorff M."/>
            <person name="Hindelang C."/>
            <person name="Thisse B."/>
            <person name="Lescure A."/>
        </authorList>
    </citation>
    <scope>FUNCTION</scope>
    <scope>DISRUPTION PHENOTYPE</scope>
</reference>
<reference key="5">
    <citation type="journal article" date="2008" name="Proc. Natl. Acad. Sci. U.S.A.">
        <title>Selenoprotein N is required for ryanodine receptor calcium release channel activity in human and zebrafish muscle.</title>
        <authorList>
            <person name="Jurynec M.J."/>
            <person name="Xia R."/>
            <person name="Mackrill J.J."/>
            <person name="Gunther D."/>
            <person name="Crawford T."/>
            <person name="Flanigan K.M."/>
            <person name="Abramson J.J."/>
            <person name="Howard M.T."/>
            <person name="Grunwald D.J."/>
        </authorList>
    </citation>
    <scope>FUNCTION</scope>
    <scope>DISRUPTION PHENOTYPE</scope>
    <scope>INTERACTION WITH RYR3</scope>
</reference>
<proteinExistence type="evidence at protein level"/>
<comment type="function">
    <text evidence="1 5 6">Plays an important role in cell protection against oxidative stress and in the regulation of redox-related calcium homeostasis. Regulates the calcium level of the ER by protecting the calcium pump ATP2A2 against the oxidoreductase ERO1A-mediated oxidative damage (By similarity). Acts as a modulator of ryanodine receptor (RyR) activity: protects RyR from oxidation due to increased oxidative stress, or directly controls the RyR redox state, regulating the RyR-mediated calcium mobilization required for normal muscle development and differentiation (PubMed:18713863). Plays an important role in muscle development and differentiation during early development. Required for development of the slow muscle fiber lineage (PubMed:18713863). Required for the correct organization and attachment of the myofibrils, as well as for the continuity and integrity of the connective tissue that forms the myoseptum (PubMed:17123513).</text>
</comment>
<comment type="subunit">
    <text evidence="6">Interacts with ryr3.</text>
</comment>
<comment type="subcellular location">
    <subcellularLocation>
        <location evidence="1">Endoplasmic reticulum membrane</location>
    </subcellularLocation>
</comment>
<comment type="developmental stage">
    <text evidence="4 6">Expressed in the anteroposterior axis and the notochord at 5 hours post-fertilization (hpf). Expressed in the eye inner cell layer of the retina at 48 hpf (PubMed:12915322). In the embryo expressed at high levels in the notochord, the tailbud, the presomitic mesoderm and the emerging somites. As the notochord and somitic muscle differentiate overtly, expression in these tissues is greatly reduced (PubMed:18713863).</text>
</comment>
<comment type="disruption phenotype">
    <text evidence="5 6">Emrbyos show disruption of muscle architecture and greatly reduced motility. Embryonic muscle tissue display disorganization of the sarcomere and myofiber attachment defects (PubMed:17123513). Embryos show a defect in the generation and development of slow muscle fibers and a decrease in the expression of myogenic lineage genes in slow muscle cell precursors (PubMed:18713863).</text>
</comment>
<comment type="sequence caution" evidence="9">
    <conflict type="erroneous termination">
        <sequence resource="EMBL-CDS" id="AAO65271"/>
    </conflict>
    <text>Truncated C-terminus.</text>
</comment>
<gene>
    <name evidence="1" type="primary">selenon</name>
    <name evidence="7" type="synonym">sepn</name>
    <name evidence="8" type="synonym">sepn1</name>
</gene>
<dbReference type="EMBL" id="DQ160295">
    <property type="protein sequence ID" value="AAZ80054.1"/>
    <property type="molecule type" value="mRNA"/>
</dbReference>
<dbReference type="EMBL" id="BC078430">
    <property type="protein sequence ID" value="AAH78430.1"/>
    <property type="molecule type" value="mRNA"/>
</dbReference>
<dbReference type="EMBL" id="BC155254">
    <property type="protein sequence ID" value="AAI55255.1"/>
    <property type="molecule type" value="mRNA"/>
</dbReference>
<dbReference type="EMBL" id="AY221262">
    <property type="protein sequence ID" value="AAO65271.1"/>
    <property type="status" value="ALT_SEQ"/>
    <property type="molecule type" value="mRNA"/>
</dbReference>
<dbReference type="RefSeq" id="NP_001004294.4">
    <property type="nucleotide sequence ID" value="NM_001004294.4"/>
</dbReference>
<dbReference type="DIP" id="DIP-46265N"/>
<dbReference type="FunCoup" id="Q3Y4E2">
    <property type="interactions" value="1041"/>
</dbReference>
<dbReference type="STRING" id="7955.ENSDARP00000119529"/>
<dbReference type="GlyCosmos" id="Q3Y4E2">
    <property type="glycosylation" value="2 sites, No reported glycans"/>
</dbReference>
<dbReference type="PaxDb" id="7955-ENSDARP00000119529"/>
<dbReference type="GeneID" id="352914"/>
<dbReference type="KEGG" id="dre:352914"/>
<dbReference type="AGR" id="ZFIN:ZDB-GENE-030327-7"/>
<dbReference type="CTD" id="57190"/>
<dbReference type="ZFIN" id="ZDB-GENE-030327-7">
    <property type="gene designation" value="selenon"/>
</dbReference>
<dbReference type="eggNOG" id="ENOG502QREI">
    <property type="taxonomic scope" value="Eukaryota"/>
</dbReference>
<dbReference type="InParanoid" id="Q3Y4E2"/>
<dbReference type="OrthoDB" id="10062435at2759"/>
<dbReference type="PhylomeDB" id="Q3Y4E2"/>
<dbReference type="PRO" id="PR:Q3Y4E2"/>
<dbReference type="Proteomes" id="UP000000437">
    <property type="component" value="Alternate scaffold 17"/>
</dbReference>
<dbReference type="Proteomes" id="UP000000437">
    <property type="component" value="Chromosome 17"/>
</dbReference>
<dbReference type="GO" id="GO:0005789">
    <property type="term" value="C:endoplasmic reticulum membrane"/>
    <property type="evidence" value="ECO:0000318"/>
    <property type="project" value="GO_Central"/>
</dbReference>
<dbReference type="GO" id="GO:0016491">
    <property type="term" value="F:oxidoreductase activity"/>
    <property type="evidence" value="ECO:0007669"/>
    <property type="project" value="UniProtKB-KW"/>
</dbReference>
<dbReference type="GO" id="GO:0055074">
    <property type="term" value="P:calcium ion homeostasis"/>
    <property type="evidence" value="ECO:0000318"/>
    <property type="project" value="GO_Central"/>
</dbReference>
<dbReference type="GO" id="GO:0019722">
    <property type="term" value="P:calcium-mediated signaling"/>
    <property type="evidence" value="ECO:0000315"/>
    <property type="project" value="UniProtKB"/>
</dbReference>
<dbReference type="GO" id="GO:0055001">
    <property type="term" value="P:muscle cell development"/>
    <property type="evidence" value="ECO:0000315"/>
    <property type="project" value="UniProtKB"/>
</dbReference>
<dbReference type="GO" id="GO:0060537">
    <property type="term" value="P:muscle tissue development"/>
    <property type="evidence" value="ECO:0000315"/>
    <property type="project" value="UniProtKB"/>
</dbReference>
<dbReference type="GO" id="GO:0060314">
    <property type="term" value="P:regulation of ryanodine-sensitive calcium-release channel activity"/>
    <property type="evidence" value="ECO:0000315"/>
    <property type="project" value="UniProtKB"/>
</dbReference>
<dbReference type="GO" id="GO:0048741">
    <property type="term" value="P:skeletal muscle fiber development"/>
    <property type="evidence" value="ECO:0000315"/>
    <property type="project" value="ZFIN"/>
</dbReference>
<dbReference type="PANTHER" id="PTHR16213">
    <property type="entry name" value="SELENOPROTEIN N"/>
    <property type="match status" value="1"/>
</dbReference>
<dbReference type="PANTHER" id="PTHR16213:SF78">
    <property type="entry name" value="SELENOPROTEIN N"/>
    <property type="match status" value="1"/>
</dbReference>
<accession>Q3Y4E2</accession>
<accession>A9JT95</accession>
<accession>Q66L54</accession>
<accession>Q802F4</accession>
<sequence length="557" mass="62624">MAADVDKTPAGEQKDDHEDRGTPSSRRGRSRFTQISSLFIIAAIPVIGVCIKYYLDIQFVKRHEAGLKALGADGLFFFSSLDTDHDLYLSPEEFKPIAEKLTGVAPPPEYEEEIPHDPNGETLTLHAKMQPLLLESMTKSKDGFLGVSHSSLSGLRSWKRPAISSSTFYASQFKVFLPPSGKSAVGDTWWIIPSELNIFTGYLPNNRFHPPTPRGKEVLIHSLLSMFHPRPFVKSRFAPQGAVACIRATSDFYYDIVFRIHAEFQLNDVPDFPFWFTPGQFAGHIILSKDASHVRDFHIYVPNDKTLNVDMEWLYGASETSNMEVDIGYLPQMELGAEGPSTPSVIYDEQGNMIDSRGEGGEPIQFVFEEIVWSEELRREEASRRLEVTMYPFKKVPYLPFSEAFSRASAEKKLVHSILLWGALDDQSCUGSGRTLRETVLESSPVLALLNQSFISSWSLVKELEDLQGDVKNVELSEKARLHLEKYTFPVQMMVVLPNGTVVHHINANNFLDQTSMKPEDEGPGLSFSAGFEDPSTSTYIRFLQEGLEKAKPYLES</sequence>
<keyword id="KW-0256">Endoplasmic reticulum</keyword>
<keyword id="KW-0325">Glycoprotein</keyword>
<keyword id="KW-0472">Membrane</keyword>
<keyword id="KW-0560">Oxidoreductase</keyword>
<keyword id="KW-1185">Reference proteome</keyword>
<keyword id="KW-0712">Selenocysteine</keyword>
<keyword id="KW-0812">Transmembrane</keyword>
<keyword id="KW-1133">Transmembrane helix</keyword>
<evidence type="ECO:0000250" key="1">
    <source>
        <dbReference type="UniProtKB" id="Q9NZV5"/>
    </source>
</evidence>
<evidence type="ECO:0000255" key="2"/>
<evidence type="ECO:0000256" key="3">
    <source>
        <dbReference type="SAM" id="MobiDB-lite"/>
    </source>
</evidence>
<evidence type="ECO:0000269" key="4">
    <source>
    </source>
</evidence>
<evidence type="ECO:0000269" key="5">
    <source>
    </source>
</evidence>
<evidence type="ECO:0000269" key="6">
    <source>
    </source>
</evidence>
<evidence type="ECO:0000303" key="7">
    <source>
    </source>
</evidence>
<evidence type="ECO:0000303" key="8">
    <source>
    </source>
</evidence>
<evidence type="ECO:0000305" key="9"/>
<organism>
    <name type="scientific">Danio rerio</name>
    <name type="common">Zebrafish</name>
    <name type="synonym">Brachydanio rerio</name>
    <dbReference type="NCBI Taxonomy" id="7955"/>
    <lineage>
        <taxon>Eukaryota</taxon>
        <taxon>Metazoa</taxon>
        <taxon>Chordata</taxon>
        <taxon>Craniata</taxon>
        <taxon>Vertebrata</taxon>
        <taxon>Euteleostomi</taxon>
        <taxon>Actinopterygii</taxon>
        <taxon>Neopterygii</taxon>
        <taxon>Teleostei</taxon>
        <taxon>Ostariophysi</taxon>
        <taxon>Cypriniformes</taxon>
        <taxon>Danionidae</taxon>
        <taxon>Danioninae</taxon>
        <taxon>Danio</taxon>
    </lineage>
</organism>
<name>SELN_DANRE</name>
<protein>
    <recommendedName>
        <fullName evidence="7">Selenoprotein N</fullName>
        <shortName evidence="7">SePN</shortName>
        <shortName evidence="1">SelN</shortName>
    </recommendedName>
</protein>